<protein>
    <recommendedName>
        <fullName evidence="1">ATP synthase subunit beta</fullName>
        <ecNumber evidence="1">7.1.2.2</ecNumber>
    </recommendedName>
    <alternativeName>
        <fullName evidence="1">ATP synthase F1 sector subunit beta</fullName>
    </alternativeName>
    <alternativeName>
        <fullName evidence="1">F-ATPase subunit beta</fullName>
    </alternativeName>
</protein>
<organism>
    <name type="scientific">Lactococcus lactis subsp. cremoris (strain SK11)</name>
    <dbReference type="NCBI Taxonomy" id="272622"/>
    <lineage>
        <taxon>Bacteria</taxon>
        <taxon>Bacillati</taxon>
        <taxon>Bacillota</taxon>
        <taxon>Bacilli</taxon>
        <taxon>Lactobacillales</taxon>
        <taxon>Streptococcaceae</taxon>
        <taxon>Lactococcus</taxon>
        <taxon>Lactococcus cremoris subsp. cremoris</taxon>
    </lineage>
</organism>
<evidence type="ECO:0000255" key="1">
    <source>
        <dbReference type="HAMAP-Rule" id="MF_01347"/>
    </source>
</evidence>
<keyword id="KW-0066">ATP synthesis</keyword>
<keyword id="KW-0067">ATP-binding</keyword>
<keyword id="KW-1003">Cell membrane</keyword>
<keyword id="KW-0139">CF(1)</keyword>
<keyword id="KW-0375">Hydrogen ion transport</keyword>
<keyword id="KW-0406">Ion transport</keyword>
<keyword id="KW-0472">Membrane</keyword>
<keyword id="KW-0547">Nucleotide-binding</keyword>
<keyword id="KW-1278">Translocase</keyword>
<keyword id="KW-0813">Transport</keyword>
<name>ATPB_LACLS</name>
<comment type="function">
    <text evidence="1">Produces ATP from ADP in the presence of a proton gradient across the membrane. The catalytic sites are hosted primarily by the beta subunits.</text>
</comment>
<comment type="catalytic activity">
    <reaction evidence="1">
        <text>ATP + H2O + 4 H(+)(in) = ADP + phosphate + 5 H(+)(out)</text>
        <dbReference type="Rhea" id="RHEA:57720"/>
        <dbReference type="ChEBI" id="CHEBI:15377"/>
        <dbReference type="ChEBI" id="CHEBI:15378"/>
        <dbReference type="ChEBI" id="CHEBI:30616"/>
        <dbReference type="ChEBI" id="CHEBI:43474"/>
        <dbReference type="ChEBI" id="CHEBI:456216"/>
        <dbReference type="EC" id="7.1.2.2"/>
    </reaction>
</comment>
<comment type="subunit">
    <text evidence="1">F-type ATPases have 2 components, CF(1) - the catalytic core - and CF(0) - the membrane proton channel. CF(1) has five subunits: alpha(3), beta(3), gamma(1), delta(1), epsilon(1). CF(0) has three main subunits: a(1), b(2) and c(9-12). The alpha and beta chains form an alternating ring which encloses part of the gamma chain. CF(1) is attached to CF(0) by a central stalk formed by the gamma and epsilon chains, while a peripheral stalk is formed by the delta and b chains.</text>
</comment>
<comment type="subcellular location">
    <subcellularLocation>
        <location evidence="1">Cell membrane</location>
        <topology evidence="1">Peripheral membrane protein</topology>
    </subcellularLocation>
</comment>
<comment type="similarity">
    <text evidence="1">Belongs to the ATPase alpha/beta chains family.</text>
</comment>
<feature type="chain" id="PRO_1000055128" description="ATP synthase subunit beta">
    <location>
        <begin position="1"/>
        <end position="469"/>
    </location>
</feature>
<feature type="binding site" evidence="1">
    <location>
        <begin position="156"/>
        <end position="163"/>
    </location>
    <ligand>
        <name>ATP</name>
        <dbReference type="ChEBI" id="CHEBI:30616"/>
    </ligand>
</feature>
<sequence length="469" mass="50867">MSSGKITQVIGPVVDVEFGSDAKLPEINNALIVYKDVNGLKTKITLEVALELGDGAVRTIAMESTDGLTRGLEVLDTGKAVSVPVGESTLGRVFNVLGDVIDGGEDFPADAERNPIHKKAPTFDELSTANEVLVTGIKVVDLLAPYLKGGKVGLFGGAGVGKTVLIQELIHNIAQEHGGISVFTGVGERTREGNDLYWEMKESGVIEKTAMVFGQMNEPPGARMRVALTGLTIAEYFRDVQGQDVLLFIDNIFRFTQAGSEVSALLGRMPSAVGYQPTLATEMGQLQERITSTKKGSVTSIQAIYVPADDYTDPAPATAFAHLDATTNLERRLTQMGIYPAVDPLASSSRAITPEIVGEEHYEVAMEVQRVLQRYKELQDIIAILGMDELSDDEKILVGRARRIQFFLSQNFHVAEQFTGQPGSYVPIDKTVHDFKEILEGKYDEVPEDAFRGVGPIEDVLAKAKSMGY</sequence>
<dbReference type="EC" id="7.1.2.2" evidence="1"/>
<dbReference type="EMBL" id="CP000425">
    <property type="protein sequence ID" value="ABJ73417.1"/>
    <property type="molecule type" value="Genomic_DNA"/>
</dbReference>
<dbReference type="RefSeq" id="WP_011676765.1">
    <property type="nucleotide sequence ID" value="NC_008527.1"/>
</dbReference>
<dbReference type="SMR" id="Q02XA5"/>
<dbReference type="KEGG" id="llc:LACR_1933"/>
<dbReference type="HOGENOM" id="CLU_022398_0_2_9"/>
<dbReference type="Proteomes" id="UP000000240">
    <property type="component" value="Chromosome"/>
</dbReference>
<dbReference type="GO" id="GO:0005886">
    <property type="term" value="C:plasma membrane"/>
    <property type="evidence" value="ECO:0007669"/>
    <property type="project" value="UniProtKB-SubCell"/>
</dbReference>
<dbReference type="GO" id="GO:0045259">
    <property type="term" value="C:proton-transporting ATP synthase complex"/>
    <property type="evidence" value="ECO:0007669"/>
    <property type="project" value="UniProtKB-KW"/>
</dbReference>
<dbReference type="GO" id="GO:0005524">
    <property type="term" value="F:ATP binding"/>
    <property type="evidence" value="ECO:0007669"/>
    <property type="project" value="UniProtKB-UniRule"/>
</dbReference>
<dbReference type="GO" id="GO:0016887">
    <property type="term" value="F:ATP hydrolysis activity"/>
    <property type="evidence" value="ECO:0007669"/>
    <property type="project" value="InterPro"/>
</dbReference>
<dbReference type="GO" id="GO:0046933">
    <property type="term" value="F:proton-transporting ATP synthase activity, rotational mechanism"/>
    <property type="evidence" value="ECO:0007669"/>
    <property type="project" value="UniProtKB-UniRule"/>
</dbReference>
<dbReference type="CDD" id="cd18110">
    <property type="entry name" value="ATP-synt_F1_beta_C"/>
    <property type="match status" value="1"/>
</dbReference>
<dbReference type="CDD" id="cd18115">
    <property type="entry name" value="ATP-synt_F1_beta_N"/>
    <property type="match status" value="1"/>
</dbReference>
<dbReference type="CDD" id="cd01133">
    <property type="entry name" value="F1-ATPase_beta_CD"/>
    <property type="match status" value="1"/>
</dbReference>
<dbReference type="FunFam" id="1.10.1140.10:FF:000001">
    <property type="entry name" value="ATP synthase subunit beta"/>
    <property type="match status" value="1"/>
</dbReference>
<dbReference type="FunFam" id="2.40.10.170:FF:000005">
    <property type="entry name" value="ATP synthase subunit beta"/>
    <property type="match status" value="1"/>
</dbReference>
<dbReference type="FunFam" id="3.40.50.300:FF:000004">
    <property type="entry name" value="ATP synthase subunit beta"/>
    <property type="match status" value="1"/>
</dbReference>
<dbReference type="Gene3D" id="2.40.10.170">
    <property type="match status" value="1"/>
</dbReference>
<dbReference type="Gene3D" id="1.10.1140.10">
    <property type="entry name" value="Bovine Mitochondrial F1-atpase, Atp Synthase Beta Chain, Chain D, domain 3"/>
    <property type="match status" value="1"/>
</dbReference>
<dbReference type="Gene3D" id="3.40.50.300">
    <property type="entry name" value="P-loop containing nucleotide triphosphate hydrolases"/>
    <property type="match status" value="1"/>
</dbReference>
<dbReference type="HAMAP" id="MF_01347">
    <property type="entry name" value="ATP_synth_beta_bact"/>
    <property type="match status" value="1"/>
</dbReference>
<dbReference type="InterPro" id="IPR003593">
    <property type="entry name" value="AAA+_ATPase"/>
</dbReference>
<dbReference type="InterPro" id="IPR055190">
    <property type="entry name" value="ATP-synt_VA_C"/>
</dbReference>
<dbReference type="InterPro" id="IPR005722">
    <property type="entry name" value="ATP_synth_F1_bsu"/>
</dbReference>
<dbReference type="InterPro" id="IPR020003">
    <property type="entry name" value="ATPase_a/bsu_AS"/>
</dbReference>
<dbReference type="InterPro" id="IPR050053">
    <property type="entry name" value="ATPase_alpha/beta_chains"/>
</dbReference>
<dbReference type="InterPro" id="IPR004100">
    <property type="entry name" value="ATPase_F1/V1/A1_a/bsu_N"/>
</dbReference>
<dbReference type="InterPro" id="IPR036121">
    <property type="entry name" value="ATPase_F1/V1/A1_a/bsu_N_sf"/>
</dbReference>
<dbReference type="InterPro" id="IPR000194">
    <property type="entry name" value="ATPase_F1/V1/A1_a/bsu_nucl-bd"/>
</dbReference>
<dbReference type="InterPro" id="IPR024034">
    <property type="entry name" value="ATPase_F1/V1_b/a_C"/>
</dbReference>
<dbReference type="InterPro" id="IPR027417">
    <property type="entry name" value="P-loop_NTPase"/>
</dbReference>
<dbReference type="NCBIfam" id="TIGR01039">
    <property type="entry name" value="atpD"/>
    <property type="match status" value="1"/>
</dbReference>
<dbReference type="PANTHER" id="PTHR15184">
    <property type="entry name" value="ATP SYNTHASE"/>
    <property type="match status" value="1"/>
</dbReference>
<dbReference type="PANTHER" id="PTHR15184:SF71">
    <property type="entry name" value="ATP SYNTHASE SUBUNIT BETA, MITOCHONDRIAL"/>
    <property type="match status" value="1"/>
</dbReference>
<dbReference type="Pfam" id="PF00006">
    <property type="entry name" value="ATP-synt_ab"/>
    <property type="match status" value="1"/>
</dbReference>
<dbReference type="Pfam" id="PF02874">
    <property type="entry name" value="ATP-synt_ab_N"/>
    <property type="match status" value="1"/>
</dbReference>
<dbReference type="Pfam" id="PF22919">
    <property type="entry name" value="ATP-synt_VA_C"/>
    <property type="match status" value="1"/>
</dbReference>
<dbReference type="SMART" id="SM00382">
    <property type="entry name" value="AAA"/>
    <property type="match status" value="1"/>
</dbReference>
<dbReference type="SUPFAM" id="SSF47917">
    <property type="entry name" value="C-terminal domain of alpha and beta subunits of F1 ATP synthase"/>
    <property type="match status" value="1"/>
</dbReference>
<dbReference type="SUPFAM" id="SSF50615">
    <property type="entry name" value="N-terminal domain of alpha and beta subunits of F1 ATP synthase"/>
    <property type="match status" value="1"/>
</dbReference>
<dbReference type="SUPFAM" id="SSF52540">
    <property type="entry name" value="P-loop containing nucleoside triphosphate hydrolases"/>
    <property type="match status" value="1"/>
</dbReference>
<dbReference type="PROSITE" id="PS00152">
    <property type="entry name" value="ATPASE_ALPHA_BETA"/>
    <property type="match status" value="1"/>
</dbReference>
<gene>
    <name evidence="1" type="primary">atpD</name>
    <name type="ordered locus">LACR_1933</name>
</gene>
<accession>Q02XA5</accession>
<reference key="1">
    <citation type="journal article" date="2006" name="Proc. Natl. Acad. Sci. U.S.A.">
        <title>Comparative genomics of the lactic acid bacteria.</title>
        <authorList>
            <person name="Makarova K.S."/>
            <person name="Slesarev A."/>
            <person name="Wolf Y.I."/>
            <person name="Sorokin A."/>
            <person name="Mirkin B."/>
            <person name="Koonin E.V."/>
            <person name="Pavlov A."/>
            <person name="Pavlova N."/>
            <person name="Karamychev V."/>
            <person name="Polouchine N."/>
            <person name="Shakhova V."/>
            <person name="Grigoriev I."/>
            <person name="Lou Y."/>
            <person name="Rohksar D."/>
            <person name="Lucas S."/>
            <person name="Huang K."/>
            <person name="Goodstein D.M."/>
            <person name="Hawkins T."/>
            <person name="Plengvidhya V."/>
            <person name="Welker D."/>
            <person name="Hughes J."/>
            <person name="Goh Y."/>
            <person name="Benson A."/>
            <person name="Baldwin K."/>
            <person name="Lee J.-H."/>
            <person name="Diaz-Muniz I."/>
            <person name="Dosti B."/>
            <person name="Smeianov V."/>
            <person name="Wechter W."/>
            <person name="Barabote R."/>
            <person name="Lorca G."/>
            <person name="Altermann E."/>
            <person name="Barrangou R."/>
            <person name="Ganesan B."/>
            <person name="Xie Y."/>
            <person name="Rawsthorne H."/>
            <person name="Tamir D."/>
            <person name="Parker C."/>
            <person name="Breidt F."/>
            <person name="Broadbent J.R."/>
            <person name="Hutkins R."/>
            <person name="O'Sullivan D."/>
            <person name="Steele J."/>
            <person name="Unlu G."/>
            <person name="Saier M.H. Jr."/>
            <person name="Klaenhammer T."/>
            <person name="Richardson P."/>
            <person name="Kozyavkin S."/>
            <person name="Weimer B.C."/>
            <person name="Mills D.A."/>
        </authorList>
    </citation>
    <scope>NUCLEOTIDE SEQUENCE [LARGE SCALE GENOMIC DNA]</scope>
    <source>
        <strain>SK11</strain>
    </source>
</reference>
<proteinExistence type="inferred from homology"/>